<protein>
    <recommendedName>
        <fullName evidence="1">Large ribosomal subunit protein uL23</fullName>
    </recommendedName>
    <alternativeName>
        <fullName evidence="2">50S ribosomal protein L23</fullName>
    </alternativeName>
</protein>
<dbReference type="EMBL" id="CP001056">
    <property type="protein sequence ID" value="ACD23111.1"/>
    <property type="molecule type" value="Genomic_DNA"/>
</dbReference>
<dbReference type="SMR" id="B2TIH7"/>
<dbReference type="KEGG" id="cbk:CLL_A0240"/>
<dbReference type="PATRIC" id="fig|935198.13.peg.215"/>
<dbReference type="HOGENOM" id="CLU_037562_3_2_9"/>
<dbReference type="Proteomes" id="UP000001195">
    <property type="component" value="Chromosome"/>
</dbReference>
<dbReference type="GO" id="GO:1990904">
    <property type="term" value="C:ribonucleoprotein complex"/>
    <property type="evidence" value="ECO:0007669"/>
    <property type="project" value="UniProtKB-KW"/>
</dbReference>
<dbReference type="GO" id="GO:0005840">
    <property type="term" value="C:ribosome"/>
    <property type="evidence" value="ECO:0007669"/>
    <property type="project" value="UniProtKB-KW"/>
</dbReference>
<dbReference type="GO" id="GO:0019843">
    <property type="term" value="F:rRNA binding"/>
    <property type="evidence" value="ECO:0007669"/>
    <property type="project" value="UniProtKB-UniRule"/>
</dbReference>
<dbReference type="GO" id="GO:0003735">
    <property type="term" value="F:structural constituent of ribosome"/>
    <property type="evidence" value="ECO:0007669"/>
    <property type="project" value="InterPro"/>
</dbReference>
<dbReference type="GO" id="GO:0006412">
    <property type="term" value="P:translation"/>
    <property type="evidence" value="ECO:0007669"/>
    <property type="project" value="UniProtKB-UniRule"/>
</dbReference>
<dbReference type="FunFam" id="3.30.70.330:FF:000001">
    <property type="entry name" value="50S ribosomal protein L23"/>
    <property type="match status" value="1"/>
</dbReference>
<dbReference type="Gene3D" id="3.30.70.330">
    <property type="match status" value="1"/>
</dbReference>
<dbReference type="HAMAP" id="MF_01369_B">
    <property type="entry name" value="Ribosomal_uL23_B"/>
    <property type="match status" value="1"/>
</dbReference>
<dbReference type="InterPro" id="IPR012677">
    <property type="entry name" value="Nucleotide-bd_a/b_plait_sf"/>
</dbReference>
<dbReference type="InterPro" id="IPR013025">
    <property type="entry name" value="Ribosomal_uL23-like"/>
</dbReference>
<dbReference type="InterPro" id="IPR012678">
    <property type="entry name" value="Ribosomal_uL23/eL15/eS24_sf"/>
</dbReference>
<dbReference type="InterPro" id="IPR001014">
    <property type="entry name" value="Ribosomal_uL23_CS"/>
</dbReference>
<dbReference type="NCBIfam" id="NF004363">
    <property type="entry name" value="PRK05738.2-4"/>
    <property type="match status" value="1"/>
</dbReference>
<dbReference type="PANTHER" id="PTHR11620">
    <property type="entry name" value="60S RIBOSOMAL PROTEIN L23A"/>
    <property type="match status" value="1"/>
</dbReference>
<dbReference type="Pfam" id="PF00276">
    <property type="entry name" value="Ribosomal_L23"/>
    <property type="match status" value="1"/>
</dbReference>
<dbReference type="SUPFAM" id="SSF54189">
    <property type="entry name" value="Ribosomal proteins S24e, L23 and L15e"/>
    <property type="match status" value="1"/>
</dbReference>
<dbReference type="PROSITE" id="PS00050">
    <property type="entry name" value="RIBOSOMAL_L23"/>
    <property type="match status" value="1"/>
</dbReference>
<evidence type="ECO:0000255" key="1">
    <source>
        <dbReference type="HAMAP-Rule" id="MF_01369"/>
    </source>
</evidence>
<evidence type="ECO:0000305" key="2"/>
<name>RL23_CLOBB</name>
<reference key="1">
    <citation type="submission" date="2008-04" db="EMBL/GenBank/DDBJ databases">
        <title>Complete sequence of Clostridium botulinum strain Eklund.</title>
        <authorList>
            <person name="Brinkac L.M."/>
            <person name="Brown J.L."/>
            <person name="Bruce D."/>
            <person name="Detter C."/>
            <person name="Munk C."/>
            <person name="Smith L.A."/>
            <person name="Smith T.J."/>
            <person name="Sutton G."/>
            <person name="Brettin T.S."/>
        </authorList>
    </citation>
    <scope>NUCLEOTIDE SEQUENCE [LARGE SCALE GENOMIC DNA]</scope>
    <source>
        <strain>Eklund 17B / Type B</strain>
    </source>
</reference>
<gene>
    <name evidence="1" type="primary">rplW</name>
    <name type="ordered locus">CLL_A0240</name>
</gene>
<comment type="function">
    <text evidence="1">One of the early assembly proteins it binds 23S rRNA. One of the proteins that surrounds the polypeptide exit tunnel on the outside of the ribosome. Forms the main docking site for trigger factor binding to the ribosome.</text>
</comment>
<comment type="subunit">
    <text evidence="1">Part of the 50S ribosomal subunit. Contacts protein L29, and trigger factor when it is bound to the ribosome.</text>
</comment>
<comment type="similarity">
    <text evidence="1">Belongs to the universal ribosomal protein uL23 family.</text>
</comment>
<keyword id="KW-0687">Ribonucleoprotein</keyword>
<keyword id="KW-0689">Ribosomal protein</keyword>
<keyword id="KW-0694">RNA-binding</keyword>
<keyword id="KW-0699">rRNA-binding</keyword>
<proteinExistence type="inferred from homology"/>
<sequence>MKLTSHDIIRKPVITEKSMAAMAEKKYTFMVHVNANKSQVKRAVEEVFDVKVKDVNTINGLGKTKRMGVHVGKRSDYKKAIVTLTEESKAIEFFDGLQ</sequence>
<feature type="chain" id="PRO_1000144555" description="Large ribosomal subunit protein uL23">
    <location>
        <begin position="1"/>
        <end position="98"/>
    </location>
</feature>
<accession>B2TIH7</accession>
<organism>
    <name type="scientific">Clostridium botulinum (strain Eklund 17B / Type B)</name>
    <dbReference type="NCBI Taxonomy" id="935198"/>
    <lineage>
        <taxon>Bacteria</taxon>
        <taxon>Bacillati</taxon>
        <taxon>Bacillota</taxon>
        <taxon>Clostridia</taxon>
        <taxon>Eubacteriales</taxon>
        <taxon>Clostridiaceae</taxon>
        <taxon>Clostridium</taxon>
    </lineage>
</organism>